<name>PRIM_ASFP4</name>
<protein>
    <recommendedName>
        <fullName>Putative helicase/primase complex protein</fullName>
        <shortName>pF1055L</shortName>
    </recommendedName>
</protein>
<organismHost>
    <name type="scientific">Ornithodoros</name>
    <name type="common">relapsing fever ticks</name>
    <dbReference type="NCBI Taxonomy" id="6937"/>
</organismHost>
<organismHost>
    <name type="scientific">Phacochoerus aethiopicus</name>
    <name type="common">Warthog</name>
    <dbReference type="NCBI Taxonomy" id="85517"/>
</organismHost>
<organismHost>
    <name type="scientific">Phacochoerus africanus</name>
    <name type="common">Warthog</name>
    <dbReference type="NCBI Taxonomy" id="41426"/>
</organismHost>
<organismHost>
    <name type="scientific">Potamochoerus larvatus</name>
    <name type="common">Bushpig</name>
    <dbReference type="NCBI Taxonomy" id="273792"/>
</organismHost>
<organismHost>
    <name type="scientific">Sus scrofa</name>
    <name type="common">Pig</name>
    <dbReference type="NCBI Taxonomy" id="9823"/>
</organismHost>
<sequence>MQETFKFLRCNSQGEAVEDKYSLETLKNHFVVRDEYNNLFRVFSSRDDFWEWEAAQPFEQKCFHEVVFGFLPQRLKFDIDFPVNKSYSNDNVDENVDDIVNDDDNVYDILDMIINVIMDVFYETYSLPYNINLTREQILLTDSIGLNKKRELKYSFHIILYTHSVLNNNEAKVFTSKVLENLPKHVYPFVDPQVNKSIQNFRIIGSHKKGSMRVKMFNEELADVFETSTTTKKSDTLIATPFETTCLPCIFTNVKETTPSSCDTIQQSELEEVLKFAGTLCKNHCFLRVHKNLVLFKRTSPSYCEICKRMHDKDNTLILRVTGNKVYQHCRHDNKHSLLMGSLSGTNNFVETYVDQVMTKSIEVHESILFEELPDPQKHIYDESSMREYERVPTLVVKAQMKIGKTIQLRNYLQKYYGNNSISKQQTIRFVTFRQIFSKNIQSRLPNFTLYSEVTGDLDSYERVIIQVESLFRLTSTAEPVDLLILDEVESIFNQFNSGLHKYFAPSFAIFMWMLETANYVICLDANLGNRTYNILQRFRGDVPIFFHWNQYKRAQHDMYYFTSSRETWLNNLLKDLLEDKKIVIPTNSLMEARLLQSFIQKKFPEKKIGFYSSKSTAHERESHFNNVSYYWGLVDILIYTPTISAGVSYEDKRFDVLYGFFNNMSCDVETCCQMLGRVRELKSKCYKICLQGKQNYFPETIEDIEMFTLQKRDTLFQTISNHQLSFTYNKETGRPIYYKTPYYHLWLETMRIQHLSKNHFITRFINQIADTGAKVFILTGEKLETVKQYTSIKMEIKHQDYVNIASAETIDANKALLIKQNLKEGITVDQQDLFAYEKYKLLEFYAWHGHKITPKFVEQYNSFMTKQNYTGRVQISRGKTVYESLTMLQTQELNFHQWAMQHAEHHDLQYNYSFQSHMYAIMLLTKCGFKCVQDPNILTNEQLMAKLVDEFVQYDLSAVSFEFKLKKPNKTDPQTILKFINKVLGLRYGLKIHHNKGNYYIKNTKAGSLIPFVRQQIKQSPCVVSNLLPITETSSVKEETSPIKETFTET</sequence>
<proteinExistence type="inferred from homology"/>
<feature type="chain" id="PRO_0000373468" description="Putative helicase/primase complex protein">
    <location>
        <begin position="1"/>
        <end position="1051"/>
    </location>
</feature>
<organism>
    <name type="scientific">African swine fever virus (isolate Tick/South Africa/Pretoriuskop Pr4/1996)</name>
    <name type="common">ASFV</name>
    <dbReference type="NCBI Taxonomy" id="561443"/>
    <lineage>
        <taxon>Viruses</taxon>
        <taxon>Varidnaviria</taxon>
        <taxon>Bamfordvirae</taxon>
        <taxon>Nucleocytoviricota</taxon>
        <taxon>Pokkesviricetes</taxon>
        <taxon>Asfuvirales</taxon>
        <taxon>Asfarviridae</taxon>
        <taxon>Asfivirus</taxon>
        <taxon>African swine fever virus</taxon>
    </lineage>
</organism>
<gene>
    <name type="ordered locus">Pret-059</name>
</gene>
<reference key="1">
    <citation type="submission" date="2003-03" db="EMBL/GenBank/DDBJ databases">
        <title>African swine fever virus genomes.</title>
        <authorList>
            <person name="Kutish G.F."/>
            <person name="Rock D.L."/>
        </authorList>
    </citation>
    <scope>NUCLEOTIDE SEQUENCE [LARGE SCALE GENOMIC DNA]</scope>
</reference>
<keyword id="KW-0235">DNA replication</keyword>
<keyword id="KW-0244">Early protein</keyword>
<dbReference type="EMBL" id="AY261363">
    <property type="status" value="NOT_ANNOTATED_CDS"/>
    <property type="molecule type" value="Genomic_DNA"/>
</dbReference>
<dbReference type="Proteomes" id="UP000000859">
    <property type="component" value="Segment"/>
</dbReference>
<dbReference type="GO" id="GO:0005524">
    <property type="term" value="F:ATP binding"/>
    <property type="evidence" value="ECO:0007669"/>
    <property type="project" value="InterPro"/>
</dbReference>
<dbReference type="GO" id="GO:0003688">
    <property type="term" value="F:DNA replication origin binding"/>
    <property type="evidence" value="ECO:0007669"/>
    <property type="project" value="InterPro"/>
</dbReference>
<dbReference type="GO" id="GO:0006260">
    <property type="term" value="P:DNA replication"/>
    <property type="evidence" value="ECO:0007669"/>
    <property type="project" value="UniProtKB-KW"/>
</dbReference>
<dbReference type="Gene3D" id="3.40.50.300">
    <property type="entry name" value="P-loop containing nucleotide triphosphate hydrolases"/>
    <property type="match status" value="1"/>
</dbReference>
<dbReference type="InterPro" id="IPR027417">
    <property type="entry name" value="P-loop_NTPase"/>
</dbReference>
<dbReference type="InterPro" id="IPR003450">
    <property type="entry name" value="Replication_origin-bd"/>
</dbReference>
<dbReference type="Pfam" id="PF02399">
    <property type="entry name" value="Herpes_ori_bp"/>
    <property type="match status" value="2"/>
</dbReference>
<dbReference type="Pfam" id="PF03121">
    <property type="entry name" value="Herpes_UL52"/>
    <property type="match status" value="1"/>
</dbReference>
<dbReference type="SUPFAM" id="SSF52540">
    <property type="entry name" value="P-loop containing nucleoside triphosphate hydrolases"/>
    <property type="match status" value="1"/>
</dbReference>
<evidence type="ECO:0000305" key="1"/>
<accession>P0CA11</accession>
<comment type="function">
    <text>May be involved in DNA replication.</text>
</comment>
<comment type="induction">
    <text evidence="1">Expressed in the early phase of the viral replicative cycle.</text>
</comment>
<comment type="similarity">
    <text evidence="1">Belongs to the asfivirus F1055L family.</text>
</comment>